<name>KAD_LEPBA</name>
<feature type="chain" id="PRO_1000100577" description="Adenylate kinase">
    <location>
        <begin position="1"/>
        <end position="186"/>
    </location>
</feature>
<feature type="region of interest" description="NMP" evidence="1">
    <location>
        <begin position="31"/>
        <end position="60"/>
    </location>
</feature>
<feature type="region of interest" description="LID" evidence="1">
    <location>
        <begin position="127"/>
        <end position="137"/>
    </location>
</feature>
<feature type="binding site" evidence="1">
    <location>
        <begin position="11"/>
        <end position="16"/>
    </location>
    <ligand>
        <name>ATP</name>
        <dbReference type="ChEBI" id="CHEBI:30616"/>
    </ligand>
</feature>
<feature type="binding site" evidence="1">
    <location>
        <position position="32"/>
    </location>
    <ligand>
        <name>AMP</name>
        <dbReference type="ChEBI" id="CHEBI:456215"/>
    </ligand>
</feature>
<feature type="binding site" evidence="1">
    <location>
        <position position="37"/>
    </location>
    <ligand>
        <name>AMP</name>
        <dbReference type="ChEBI" id="CHEBI:456215"/>
    </ligand>
</feature>
<feature type="binding site" evidence="1">
    <location>
        <begin position="58"/>
        <end position="60"/>
    </location>
    <ligand>
        <name>AMP</name>
        <dbReference type="ChEBI" id="CHEBI:456215"/>
    </ligand>
</feature>
<feature type="binding site" evidence="1">
    <location>
        <begin position="86"/>
        <end position="89"/>
    </location>
    <ligand>
        <name>AMP</name>
        <dbReference type="ChEBI" id="CHEBI:456215"/>
    </ligand>
</feature>
<feature type="binding site" evidence="1">
    <location>
        <position position="93"/>
    </location>
    <ligand>
        <name>AMP</name>
        <dbReference type="ChEBI" id="CHEBI:456215"/>
    </ligand>
</feature>
<feature type="binding site" evidence="1">
    <location>
        <position position="128"/>
    </location>
    <ligand>
        <name>ATP</name>
        <dbReference type="ChEBI" id="CHEBI:30616"/>
    </ligand>
</feature>
<feature type="binding site" evidence="1">
    <location>
        <position position="134"/>
    </location>
    <ligand>
        <name>AMP</name>
        <dbReference type="ChEBI" id="CHEBI:456215"/>
    </ligand>
</feature>
<feature type="binding site" evidence="1">
    <location>
        <position position="145"/>
    </location>
    <ligand>
        <name>AMP</name>
        <dbReference type="ChEBI" id="CHEBI:456215"/>
    </ligand>
</feature>
<feature type="binding site" evidence="1">
    <location>
        <position position="173"/>
    </location>
    <ligand>
        <name>ATP</name>
        <dbReference type="ChEBI" id="CHEBI:30616"/>
    </ligand>
</feature>
<proteinExistence type="inferred from homology"/>
<comment type="function">
    <text evidence="1">Catalyzes the reversible transfer of the terminal phosphate group between ATP and AMP. Plays an important role in cellular energy homeostasis and in adenine nucleotide metabolism.</text>
</comment>
<comment type="catalytic activity">
    <reaction evidence="1">
        <text>AMP + ATP = 2 ADP</text>
        <dbReference type="Rhea" id="RHEA:12973"/>
        <dbReference type="ChEBI" id="CHEBI:30616"/>
        <dbReference type="ChEBI" id="CHEBI:456215"/>
        <dbReference type="ChEBI" id="CHEBI:456216"/>
        <dbReference type="EC" id="2.7.4.3"/>
    </reaction>
</comment>
<comment type="pathway">
    <text evidence="1">Purine metabolism; AMP biosynthesis via salvage pathway; AMP from ADP: step 1/1.</text>
</comment>
<comment type="subunit">
    <text evidence="1">Monomer.</text>
</comment>
<comment type="subcellular location">
    <subcellularLocation>
        <location evidence="1">Cytoplasm</location>
    </subcellularLocation>
</comment>
<comment type="domain">
    <text evidence="1">Consists of three domains, a large central CORE domain and two small peripheral domains, NMPbind and LID, which undergo movements during catalysis. The LID domain closes over the site of phosphoryl transfer upon ATP binding. Assembling and dissambling the active center during each catalytic cycle provides an effective means to prevent ATP hydrolysis.</text>
</comment>
<comment type="similarity">
    <text evidence="1">Belongs to the adenylate kinase family.</text>
</comment>
<evidence type="ECO:0000255" key="1">
    <source>
        <dbReference type="HAMAP-Rule" id="MF_00235"/>
    </source>
</evidence>
<organism>
    <name type="scientific">Leptospira biflexa serovar Patoc (strain Patoc 1 / Ames)</name>
    <dbReference type="NCBI Taxonomy" id="355278"/>
    <lineage>
        <taxon>Bacteria</taxon>
        <taxon>Pseudomonadati</taxon>
        <taxon>Spirochaetota</taxon>
        <taxon>Spirochaetia</taxon>
        <taxon>Leptospirales</taxon>
        <taxon>Leptospiraceae</taxon>
        <taxon>Leptospira</taxon>
    </lineage>
</organism>
<protein>
    <recommendedName>
        <fullName evidence="1">Adenylate kinase</fullName>
        <shortName evidence="1">AK</shortName>
        <ecNumber evidence="1">2.7.4.3</ecNumber>
    </recommendedName>
    <alternativeName>
        <fullName evidence="1">ATP-AMP transphosphorylase</fullName>
    </alternativeName>
    <alternativeName>
        <fullName evidence="1">ATP:AMP phosphotransferase</fullName>
    </alternativeName>
    <alternativeName>
        <fullName evidence="1">Adenylate monophosphate kinase</fullName>
    </alternativeName>
</protein>
<gene>
    <name evidence="1" type="primary">adk</name>
    <name type="ordered locus">LBF_1892</name>
</gene>
<dbReference type="EC" id="2.7.4.3" evidence="1"/>
<dbReference type="EMBL" id="CP000777">
    <property type="protein sequence ID" value="ABZ94396.1"/>
    <property type="molecule type" value="Genomic_DNA"/>
</dbReference>
<dbReference type="RefSeq" id="WP_012388924.1">
    <property type="nucleotide sequence ID" value="NC_010842.1"/>
</dbReference>
<dbReference type="SMR" id="B0SA26"/>
<dbReference type="KEGG" id="lbf:LBF_1892"/>
<dbReference type="HOGENOM" id="CLU_032354_4_1_12"/>
<dbReference type="UniPathway" id="UPA00588">
    <property type="reaction ID" value="UER00649"/>
</dbReference>
<dbReference type="GO" id="GO:0005737">
    <property type="term" value="C:cytoplasm"/>
    <property type="evidence" value="ECO:0007669"/>
    <property type="project" value="UniProtKB-SubCell"/>
</dbReference>
<dbReference type="GO" id="GO:0004017">
    <property type="term" value="F:adenylate kinase activity"/>
    <property type="evidence" value="ECO:0007669"/>
    <property type="project" value="UniProtKB-UniRule"/>
</dbReference>
<dbReference type="GO" id="GO:0005524">
    <property type="term" value="F:ATP binding"/>
    <property type="evidence" value="ECO:0007669"/>
    <property type="project" value="UniProtKB-UniRule"/>
</dbReference>
<dbReference type="GO" id="GO:0044209">
    <property type="term" value="P:AMP salvage"/>
    <property type="evidence" value="ECO:0007669"/>
    <property type="project" value="UniProtKB-UniRule"/>
</dbReference>
<dbReference type="CDD" id="cd01428">
    <property type="entry name" value="ADK"/>
    <property type="match status" value="1"/>
</dbReference>
<dbReference type="Gene3D" id="3.40.50.300">
    <property type="entry name" value="P-loop containing nucleotide triphosphate hydrolases"/>
    <property type="match status" value="1"/>
</dbReference>
<dbReference type="HAMAP" id="MF_00235">
    <property type="entry name" value="Adenylate_kinase_Adk"/>
    <property type="match status" value="1"/>
</dbReference>
<dbReference type="InterPro" id="IPR006259">
    <property type="entry name" value="Adenyl_kin_sub"/>
</dbReference>
<dbReference type="InterPro" id="IPR000850">
    <property type="entry name" value="Adenylat/UMP-CMP_kin"/>
</dbReference>
<dbReference type="InterPro" id="IPR033690">
    <property type="entry name" value="Adenylat_kinase_CS"/>
</dbReference>
<dbReference type="InterPro" id="IPR027417">
    <property type="entry name" value="P-loop_NTPase"/>
</dbReference>
<dbReference type="NCBIfam" id="TIGR01351">
    <property type="entry name" value="adk"/>
    <property type="match status" value="1"/>
</dbReference>
<dbReference type="NCBIfam" id="NF001381">
    <property type="entry name" value="PRK00279.1-3"/>
    <property type="match status" value="1"/>
</dbReference>
<dbReference type="NCBIfam" id="NF011100">
    <property type="entry name" value="PRK14527.1"/>
    <property type="match status" value="1"/>
</dbReference>
<dbReference type="NCBIfam" id="NF011101">
    <property type="entry name" value="PRK14528.1"/>
    <property type="match status" value="1"/>
</dbReference>
<dbReference type="NCBIfam" id="NF011104">
    <property type="entry name" value="PRK14531.1"/>
    <property type="match status" value="1"/>
</dbReference>
<dbReference type="NCBIfam" id="NF011105">
    <property type="entry name" value="PRK14532.1"/>
    <property type="match status" value="1"/>
</dbReference>
<dbReference type="PANTHER" id="PTHR23359">
    <property type="entry name" value="NUCLEOTIDE KINASE"/>
    <property type="match status" value="1"/>
</dbReference>
<dbReference type="Pfam" id="PF00406">
    <property type="entry name" value="ADK"/>
    <property type="match status" value="1"/>
</dbReference>
<dbReference type="PRINTS" id="PR00094">
    <property type="entry name" value="ADENYLTKNASE"/>
</dbReference>
<dbReference type="SUPFAM" id="SSF52540">
    <property type="entry name" value="P-loop containing nucleoside triphosphate hydrolases"/>
    <property type="match status" value="1"/>
</dbReference>
<dbReference type="PROSITE" id="PS00113">
    <property type="entry name" value="ADENYLATE_KINASE"/>
    <property type="match status" value="1"/>
</dbReference>
<accession>B0SA26</accession>
<sequence>MKRLIFMGPPGAGKGTQADIIKEKYNIPQISTGDILRAAVKNGTAMGIEAKKYMDAGDLVPDAVVIGIIRDRLVEADCANGFILDGFPRTVEQAKALSEILKELHMELDSVVNLDVPDEELVKRLLGRAIKEGRSDDNEETIKNRLHTYNTKTLPLIDFYKATGILRQINGLGSMEEITNTILKSI</sequence>
<keyword id="KW-0067">ATP-binding</keyword>
<keyword id="KW-0963">Cytoplasm</keyword>
<keyword id="KW-0418">Kinase</keyword>
<keyword id="KW-0545">Nucleotide biosynthesis</keyword>
<keyword id="KW-0547">Nucleotide-binding</keyword>
<keyword id="KW-0808">Transferase</keyword>
<reference key="1">
    <citation type="journal article" date="2008" name="PLoS ONE">
        <title>Genome sequence of the saprophyte Leptospira biflexa provides insights into the evolution of Leptospira and the pathogenesis of leptospirosis.</title>
        <authorList>
            <person name="Picardeau M."/>
            <person name="Bulach D.M."/>
            <person name="Bouchier C."/>
            <person name="Zuerner R.L."/>
            <person name="Zidane N."/>
            <person name="Wilson P.J."/>
            <person name="Creno S."/>
            <person name="Kuczek E.S."/>
            <person name="Bommezzadri S."/>
            <person name="Davis J.C."/>
            <person name="McGrath A."/>
            <person name="Johnson M.J."/>
            <person name="Boursaux-Eude C."/>
            <person name="Seemann T."/>
            <person name="Rouy Z."/>
            <person name="Coppel R.L."/>
            <person name="Rood J.I."/>
            <person name="Lajus A."/>
            <person name="Davies J.K."/>
            <person name="Medigue C."/>
            <person name="Adler B."/>
        </authorList>
    </citation>
    <scope>NUCLEOTIDE SEQUENCE [LARGE SCALE GENOMIC DNA]</scope>
    <source>
        <strain>Patoc 1 / Ames</strain>
    </source>
</reference>